<comment type="function">
    <text evidence="2">Component of the ubiquinol-cytochrome c reductase complex (complex III or cytochrome b-c1 complex) that is part of the mitochondrial respiratory chain. The b-c1 complex mediates electron transfer from ubiquinol to cytochrome c. Contributes to the generation of a proton gradient across the mitochondrial membrane that is then used for ATP synthesis.</text>
</comment>
<comment type="cofactor">
    <cofactor evidence="2">
        <name>heme b</name>
        <dbReference type="ChEBI" id="CHEBI:60344"/>
    </cofactor>
    <text evidence="2">Binds 2 heme b groups non-covalently.</text>
</comment>
<comment type="subunit">
    <text evidence="2">The cytochrome bc1 complex contains 11 subunits: 3 respiratory subunits (MT-CYB, CYC1 and UQCRFS1), 2 core proteins (UQCRC1 and UQCRC2) and 6 low-molecular weight proteins (UQCRH/QCR6, UQCRB/QCR7, UQCRQ/QCR8, UQCR10/QCR9, UQCR11/QCR10 and a cleavage product of UQCRFS1). This cytochrome bc1 complex then forms a dimer.</text>
</comment>
<comment type="subcellular location">
    <subcellularLocation>
        <location evidence="2">Mitochondrion inner membrane</location>
        <topology evidence="2">Multi-pass membrane protein</topology>
    </subcellularLocation>
</comment>
<comment type="miscellaneous">
    <text evidence="1">Heme 1 (or BL or b562) is low-potential and absorbs at about 562 nm, and heme 2 (or BH or b566) is high-potential and absorbs at about 566 nm.</text>
</comment>
<comment type="similarity">
    <text evidence="3 4">Belongs to the cytochrome b family.</text>
</comment>
<comment type="caution">
    <text evidence="2">The full-length protein contains only eight transmembrane helices, not nine as predicted by bioinformatics tools.</text>
</comment>
<proteinExistence type="inferred from homology"/>
<name>CYB_CROWU</name>
<sequence length="379" mass="42529">MNNIRKIHPLVKIINSSLIDLPAPSNISSWWNFGSLLGICLITQILTGLFLAMHYTSDTMTAFSSVTHICRDVNYGWLIRYLHANGASMFFICLFLHVGRGLYYGSYMYLETWNIGILLLFAVMATAFMGYVLPWGQMSFWGATVITNLLSAIPYIGTNLVEWIWGGFSVDKATLTRFFAFHFILPFIVAALAGVHLLFLHETGSNNPSGLNSDTDKIPFHPYYTIKDILGALIMITILSSLVLFSPDMLGDPDNYIPANPLNTPPHIKPEWYFLFAYAILRSIPNKLGGVLALVLSIAILAVIPLLHTAKQRSMMFRPMSQCLFWILVADLLTLTWIGGQPVEHPFVVIGQLASVTYFTLILLIMPITSMIENQLLKW</sequence>
<gene>
    <name type="primary">MT-CYB</name>
    <name type="synonym">COB</name>
    <name type="synonym">CYTB</name>
    <name type="synonym">MTCYB</name>
</gene>
<accession>Q1XIP7</accession>
<accession>Q1XIP6</accession>
<keyword id="KW-0249">Electron transport</keyword>
<keyword id="KW-0349">Heme</keyword>
<keyword id="KW-0408">Iron</keyword>
<keyword id="KW-0472">Membrane</keyword>
<keyword id="KW-0479">Metal-binding</keyword>
<keyword id="KW-0496">Mitochondrion</keyword>
<keyword id="KW-0999">Mitochondrion inner membrane</keyword>
<keyword id="KW-0679">Respiratory chain</keyword>
<keyword id="KW-0812">Transmembrane</keyword>
<keyword id="KW-1133">Transmembrane helix</keyword>
<keyword id="KW-0813">Transport</keyword>
<keyword id="KW-0830">Ubiquinone</keyword>
<geneLocation type="mitochondrion"/>
<reference key="1">
    <citation type="submission" date="2004-03" db="EMBL/GenBank/DDBJ databases">
        <title>Molecular phylogenetics of the Soricidae (Insectivora, Mammalia) based on mitochondrial cytochrome b gene sequences.</title>
        <authorList>
            <person name="Ohdachi S.D."/>
            <person name="Iwasa M.A."/>
            <person name="Abe H."/>
            <person name="Vogel P."/>
            <person name="Oshida T."/>
            <person name="Lin L.K."/>
            <person name="Hasegawa M."/>
        </authorList>
    </citation>
    <scope>NUCLEOTIDE SEQUENCE [GENOMIC DNA]</scope>
    <source>
        <strain>Isolate AMNH 101499</strain>
        <strain>Isolate AMNH 101508</strain>
    </source>
</reference>
<feature type="chain" id="PRO_0000254683" description="Cytochrome b">
    <location>
        <begin position="1"/>
        <end position="379"/>
    </location>
</feature>
<feature type="transmembrane region" description="Helical" evidence="2">
    <location>
        <begin position="33"/>
        <end position="53"/>
    </location>
</feature>
<feature type="transmembrane region" description="Helical" evidence="2">
    <location>
        <begin position="77"/>
        <end position="98"/>
    </location>
</feature>
<feature type="transmembrane region" description="Helical" evidence="2">
    <location>
        <begin position="113"/>
        <end position="133"/>
    </location>
</feature>
<feature type="transmembrane region" description="Helical" evidence="2">
    <location>
        <begin position="178"/>
        <end position="198"/>
    </location>
</feature>
<feature type="transmembrane region" description="Helical" evidence="2">
    <location>
        <begin position="226"/>
        <end position="246"/>
    </location>
</feature>
<feature type="transmembrane region" description="Helical" evidence="2">
    <location>
        <begin position="288"/>
        <end position="308"/>
    </location>
</feature>
<feature type="transmembrane region" description="Helical" evidence="2">
    <location>
        <begin position="320"/>
        <end position="340"/>
    </location>
</feature>
<feature type="transmembrane region" description="Helical" evidence="2">
    <location>
        <begin position="347"/>
        <end position="367"/>
    </location>
</feature>
<feature type="binding site" description="axial binding residue" evidence="2">
    <location>
        <position position="83"/>
    </location>
    <ligand>
        <name>heme b</name>
        <dbReference type="ChEBI" id="CHEBI:60344"/>
        <label>b562</label>
    </ligand>
    <ligandPart>
        <name>Fe</name>
        <dbReference type="ChEBI" id="CHEBI:18248"/>
    </ligandPart>
</feature>
<feature type="binding site" description="axial binding residue" evidence="2">
    <location>
        <position position="97"/>
    </location>
    <ligand>
        <name>heme b</name>
        <dbReference type="ChEBI" id="CHEBI:60344"/>
        <label>b566</label>
    </ligand>
    <ligandPart>
        <name>Fe</name>
        <dbReference type="ChEBI" id="CHEBI:18248"/>
    </ligandPart>
</feature>
<feature type="binding site" description="axial binding residue" evidence="2">
    <location>
        <position position="182"/>
    </location>
    <ligand>
        <name>heme b</name>
        <dbReference type="ChEBI" id="CHEBI:60344"/>
        <label>b562</label>
    </ligand>
    <ligandPart>
        <name>Fe</name>
        <dbReference type="ChEBI" id="CHEBI:18248"/>
    </ligandPart>
</feature>
<feature type="binding site" description="axial binding residue" evidence="2">
    <location>
        <position position="196"/>
    </location>
    <ligand>
        <name>heme b</name>
        <dbReference type="ChEBI" id="CHEBI:60344"/>
        <label>b566</label>
    </ligand>
    <ligandPart>
        <name>Fe</name>
        <dbReference type="ChEBI" id="CHEBI:18248"/>
    </ligandPart>
</feature>
<feature type="binding site" evidence="2">
    <location>
        <position position="201"/>
    </location>
    <ligand>
        <name>a ubiquinone</name>
        <dbReference type="ChEBI" id="CHEBI:16389"/>
    </ligand>
</feature>
<feature type="sequence variant" description="In strain: Isolate AMNH 101508.">
    <original>L</original>
    <variation>F</variation>
    <location>
        <position position="18"/>
    </location>
</feature>
<organism>
    <name type="scientific">Crocidura wuchihensis</name>
    <name type="common">Shrew</name>
    <dbReference type="NCBI Taxonomy" id="269632"/>
    <lineage>
        <taxon>Eukaryota</taxon>
        <taxon>Metazoa</taxon>
        <taxon>Chordata</taxon>
        <taxon>Craniata</taxon>
        <taxon>Vertebrata</taxon>
        <taxon>Euteleostomi</taxon>
        <taxon>Mammalia</taxon>
        <taxon>Eutheria</taxon>
        <taxon>Laurasiatheria</taxon>
        <taxon>Eulipotyphla</taxon>
        <taxon>Soricidae</taxon>
        <taxon>Crocidurinae</taxon>
        <taxon>Crocidura</taxon>
    </lineage>
</organism>
<dbReference type="EMBL" id="AB175084">
    <property type="protein sequence ID" value="BAE92649.1"/>
    <property type="molecule type" value="Genomic_DNA"/>
</dbReference>
<dbReference type="EMBL" id="AB175085">
    <property type="protein sequence ID" value="BAE92650.1"/>
    <property type="molecule type" value="Genomic_DNA"/>
</dbReference>
<dbReference type="SMR" id="Q1XIP7"/>
<dbReference type="GO" id="GO:0005743">
    <property type="term" value="C:mitochondrial inner membrane"/>
    <property type="evidence" value="ECO:0007669"/>
    <property type="project" value="UniProtKB-SubCell"/>
</dbReference>
<dbReference type="GO" id="GO:0045275">
    <property type="term" value="C:respiratory chain complex III"/>
    <property type="evidence" value="ECO:0007669"/>
    <property type="project" value="InterPro"/>
</dbReference>
<dbReference type="GO" id="GO:0046872">
    <property type="term" value="F:metal ion binding"/>
    <property type="evidence" value="ECO:0007669"/>
    <property type="project" value="UniProtKB-KW"/>
</dbReference>
<dbReference type="GO" id="GO:0008121">
    <property type="term" value="F:ubiquinol-cytochrome-c reductase activity"/>
    <property type="evidence" value="ECO:0007669"/>
    <property type="project" value="InterPro"/>
</dbReference>
<dbReference type="GO" id="GO:0006122">
    <property type="term" value="P:mitochondrial electron transport, ubiquinol to cytochrome c"/>
    <property type="evidence" value="ECO:0007669"/>
    <property type="project" value="TreeGrafter"/>
</dbReference>
<dbReference type="CDD" id="cd00290">
    <property type="entry name" value="cytochrome_b_C"/>
    <property type="match status" value="1"/>
</dbReference>
<dbReference type="CDD" id="cd00284">
    <property type="entry name" value="Cytochrome_b_N"/>
    <property type="match status" value="1"/>
</dbReference>
<dbReference type="FunFam" id="1.20.810.10:FF:000002">
    <property type="entry name" value="Cytochrome b"/>
    <property type="match status" value="1"/>
</dbReference>
<dbReference type="Gene3D" id="1.20.810.10">
    <property type="entry name" value="Cytochrome Bc1 Complex, Chain C"/>
    <property type="match status" value="1"/>
</dbReference>
<dbReference type="InterPro" id="IPR005798">
    <property type="entry name" value="Cyt_b/b6_C"/>
</dbReference>
<dbReference type="InterPro" id="IPR036150">
    <property type="entry name" value="Cyt_b/b6_C_sf"/>
</dbReference>
<dbReference type="InterPro" id="IPR005797">
    <property type="entry name" value="Cyt_b/b6_N"/>
</dbReference>
<dbReference type="InterPro" id="IPR027387">
    <property type="entry name" value="Cytb/b6-like_sf"/>
</dbReference>
<dbReference type="InterPro" id="IPR030689">
    <property type="entry name" value="Cytochrome_b"/>
</dbReference>
<dbReference type="InterPro" id="IPR048260">
    <property type="entry name" value="Cytochrome_b_C_euk/bac"/>
</dbReference>
<dbReference type="InterPro" id="IPR048259">
    <property type="entry name" value="Cytochrome_b_N_euk/bac"/>
</dbReference>
<dbReference type="InterPro" id="IPR016174">
    <property type="entry name" value="Di-haem_cyt_TM"/>
</dbReference>
<dbReference type="PANTHER" id="PTHR19271">
    <property type="entry name" value="CYTOCHROME B"/>
    <property type="match status" value="1"/>
</dbReference>
<dbReference type="PANTHER" id="PTHR19271:SF16">
    <property type="entry name" value="CYTOCHROME B"/>
    <property type="match status" value="1"/>
</dbReference>
<dbReference type="Pfam" id="PF00032">
    <property type="entry name" value="Cytochrom_B_C"/>
    <property type="match status" value="1"/>
</dbReference>
<dbReference type="Pfam" id="PF00033">
    <property type="entry name" value="Cytochrome_B"/>
    <property type="match status" value="1"/>
</dbReference>
<dbReference type="PIRSF" id="PIRSF038885">
    <property type="entry name" value="COB"/>
    <property type="match status" value="1"/>
</dbReference>
<dbReference type="SUPFAM" id="SSF81648">
    <property type="entry name" value="a domain/subunit of cytochrome bc1 complex (Ubiquinol-cytochrome c reductase)"/>
    <property type="match status" value="1"/>
</dbReference>
<dbReference type="SUPFAM" id="SSF81342">
    <property type="entry name" value="Transmembrane di-heme cytochromes"/>
    <property type="match status" value="1"/>
</dbReference>
<dbReference type="PROSITE" id="PS51003">
    <property type="entry name" value="CYTB_CTER"/>
    <property type="match status" value="1"/>
</dbReference>
<dbReference type="PROSITE" id="PS51002">
    <property type="entry name" value="CYTB_NTER"/>
    <property type="match status" value="1"/>
</dbReference>
<evidence type="ECO:0000250" key="1"/>
<evidence type="ECO:0000250" key="2">
    <source>
        <dbReference type="UniProtKB" id="P00157"/>
    </source>
</evidence>
<evidence type="ECO:0000255" key="3">
    <source>
        <dbReference type="PROSITE-ProRule" id="PRU00967"/>
    </source>
</evidence>
<evidence type="ECO:0000255" key="4">
    <source>
        <dbReference type="PROSITE-ProRule" id="PRU00968"/>
    </source>
</evidence>
<protein>
    <recommendedName>
        <fullName>Cytochrome b</fullName>
    </recommendedName>
    <alternativeName>
        <fullName>Complex III subunit 3</fullName>
    </alternativeName>
    <alternativeName>
        <fullName>Complex III subunit III</fullName>
    </alternativeName>
    <alternativeName>
        <fullName>Cytochrome b-c1 complex subunit 3</fullName>
    </alternativeName>
    <alternativeName>
        <fullName>Ubiquinol-cytochrome-c reductase complex cytochrome b subunit</fullName>
    </alternativeName>
</protein>